<organism>
    <name type="scientific">Chlamydomonas reinhardtii</name>
    <name type="common">Chlamydomonas smithii</name>
    <dbReference type="NCBI Taxonomy" id="3055"/>
    <lineage>
        <taxon>Eukaryota</taxon>
        <taxon>Viridiplantae</taxon>
        <taxon>Chlorophyta</taxon>
        <taxon>core chlorophytes</taxon>
        <taxon>Chlorophyceae</taxon>
        <taxon>CS clade</taxon>
        <taxon>Chlamydomonadales</taxon>
        <taxon>Chlamydomonadaceae</taxon>
        <taxon>Chlamydomonas</taxon>
    </lineage>
</organism>
<reference key="1">
    <citation type="journal article" date="1996" name="Plant Mol. Biol.">
        <title>The Chlamydomonas reinhardtii LI818 gene represents a distant relative of the cabI/II genes that is regulated during the cell cycle and in response to illumination.</title>
        <authorList>
            <person name="Savard F."/>
            <person name="Richard C."/>
            <person name="Guertin M."/>
        </authorList>
    </citation>
    <scope>NUCLEOTIDE SEQUENCE [MRNA]</scope>
    <scope>INDUCTION BY LIGHT</scope>
    <source>
        <strain>CC-620</strain>
    </source>
</reference>
<reference key="2">
    <citation type="journal article" date="2007" name="Science">
        <title>The Chlamydomonas genome reveals the evolution of key animal and plant functions.</title>
        <authorList>
            <person name="Merchant S.S."/>
            <person name="Prochnik S.E."/>
            <person name="Vallon O."/>
            <person name="Harris E.H."/>
            <person name="Karpowicz S.J."/>
            <person name="Witman G.B."/>
            <person name="Terry A."/>
            <person name="Salamov A."/>
            <person name="Fritz-Laylin L.K."/>
            <person name="Marechal-Drouard L."/>
            <person name="Marshall W.F."/>
            <person name="Qu L.H."/>
            <person name="Nelson D.R."/>
            <person name="Sanderfoot A.A."/>
            <person name="Spalding M.H."/>
            <person name="Kapitonov V.V."/>
            <person name="Ren Q."/>
            <person name="Ferris P."/>
            <person name="Lindquist E."/>
            <person name="Shapiro H."/>
            <person name="Lucas S.M."/>
            <person name="Grimwood J."/>
            <person name="Schmutz J."/>
            <person name="Cardol P."/>
            <person name="Cerutti H."/>
            <person name="Chanfreau G."/>
            <person name="Chen C.L."/>
            <person name="Cognat V."/>
            <person name="Croft M.T."/>
            <person name="Dent R."/>
            <person name="Dutcher S."/>
            <person name="Fernandez E."/>
            <person name="Fukuzawa H."/>
            <person name="Gonzalez-Ballester D."/>
            <person name="Gonzalez-Halphen D."/>
            <person name="Hallmann A."/>
            <person name="Hanikenne M."/>
            <person name="Hippler M."/>
            <person name="Inwood W."/>
            <person name="Jabbari K."/>
            <person name="Kalanon M."/>
            <person name="Kuras R."/>
            <person name="Lefebvre P.A."/>
            <person name="Lemaire S.D."/>
            <person name="Lobanov A.V."/>
            <person name="Lohr M."/>
            <person name="Manuell A."/>
            <person name="Meier I."/>
            <person name="Mets L."/>
            <person name="Mittag M."/>
            <person name="Mittelmeier T."/>
            <person name="Moroney J.V."/>
            <person name="Moseley J."/>
            <person name="Napoli C."/>
            <person name="Nedelcu A.M."/>
            <person name="Niyogi K."/>
            <person name="Novoselov S.V."/>
            <person name="Paulsen I.T."/>
            <person name="Pazour G.J."/>
            <person name="Purton S."/>
            <person name="Ral J.P."/>
            <person name="Riano-Pachon D.M."/>
            <person name="Riekhof W."/>
            <person name="Rymarquis L."/>
            <person name="Schroda M."/>
            <person name="Stern D."/>
            <person name="Umen J."/>
            <person name="Willows R."/>
            <person name="Wilson N."/>
            <person name="Zimmer S.L."/>
            <person name="Allmer J."/>
            <person name="Balk J."/>
            <person name="Bisova K."/>
            <person name="Chen C.J."/>
            <person name="Elias M."/>
            <person name="Gendler K."/>
            <person name="Hauser C."/>
            <person name="Lamb M.R."/>
            <person name="Ledford H."/>
            <person name="Long J.C."/>
            <person name="Minagawa J."/>
            <person name="Page M.D."/>
            <person name="Pan J."/>
            <person name="Pootakham W."/>
            <person name="Roje S."/>
            <person name="Rose A."/>
            <person name="Stahlberg E."/>
            <person name="Terauchi A.M."/>
            <person name="Yang P."/>
            <person name="Ball S."/>
            <person name="Bowler C."/>
            <person name="Dieckmann C.L."/>
            <person name="Gladyshev V.N."/>
            <person name="Green P."/>
            <person name="Jorgensen R."/>
            <person name="Mayfield S."/>
            <person name="Mueller-Roeber B."/>
            <person name="Rajamani S."/>
            <person name="Sayre R.T."/>
            <person name="Brokstein P."/>
            <person name="Dubchak I."/>
            <person name="Goodstein D."/>
            <person name="Hornick L."/>
            <person name="Huang Y.W."/>
            <person name="Jhaveri J."/>
            <person name="Luo Y."/>
            <person name="Martinez D."/>
            <person name="Ngau W.C."/>
            <person name="Otillar B."/>
            <person name="Poliakov A."/>
            <person name="Porter A."/>
            <person name="Szajkowski L."/>
            <person name="Werner G."/>
            <person name="Zhou K."/>
            <person name="Grigoriev I.V."/>
            <person name="Rokhsar D.S."/>
            <person name="Grossman A.R."/>
        </authorList>
    </citation>
    <scope>NUCLEOTIDE SEQUENCE [LARGE SCALE GENOMIC DNA]</scope>
    <source>
        <strain>CC-503</strain>
    </source>
</reference>
<reference key="3">
    <citation type="submission" date="2017-07" db="EMBL/GenBank/DDBJ databases">
        <title>WGS assembly of Chlamydomonas reinhardtii.</title>
        <authorList>
            <consortium name="Chlamydomonas Annotation Team"/>
            <consortium name="JGI Annotation Team"/>
            <person name="Merchant S.S."/>
            <person name="Prochnik S.E."/>
            <person name="Vallon O."/>
            <person name="Harris E.H."/>
            <person name="Karpowicz S.J."/>
            <person name="Witman G.B."/>
            <person name="Terry A."/>
            <person name="Salamov A."/>
            <person name="Fritz-Laylin L.K."/>
            <person name="Marechal-Drouard L."/>
            <person name="Marshall W.F."/>
            <person name="Qu L.H."/>
            <person name="Nelson D.R."/>
            <person name="Sanderfoot A.A."/>
            <person name="Spalding M.H."/>
            <person name="Kapitonov V.V."/>
            <person name="Ren Q."/>
            <person name="Ferris P."/>
            <person name="Lindquist E."/>
            <person name="Shapiro H."/>
            <person name="Lucas S.M."/>
            <person name="Grimwood J."/>
            <person name="Schmutz J."/>
            <person name="Grigoriev I.V."/>
            <person name="Rokhsar D.S."/>
        </authorList>
    </citation>
    <scope>GENOME REANNOTATION</scope>
    <source>
        <strain>CC-503</strain>
    </source>
</reference>
<reference key="4">
    <citation type="journal article" date="2000" name="Plant Mol. Biol.">
        <title>Characterization of the LI818 polypeptide from the green unicellular alga Chlamydomonas reinhardtii.</title>
        <authorList>
            <person name="Richard C."/>
            <person name="Ouellet H."/>
            <person name="Guertin M."/>
        </authorList>
    </citation>
    <scope>SUBCELLULAR LOCATION</scope>
    <scope>INDUCTION BY LIGHT</scope>
</reference>
<reference key="5">
    <citation type="journal article" date="2009" name="Nature">
        <title>An ancient light-harvesting protein is critical for the regulation of algal photosynthesis.</title>
        <authorList>
            <person name="Peers G."/>
            <person name="Truong T.B."/>
            <person name="Ostendorf E."/>
            <person name="Busch A."/>
            <person name="Elrad D."/>
            <person name="Grossman A.R."/>
            <person name="Hippler M."/>
            <person name="Niyogi K.K."/>
        </authorList>
    </citation>
    <scope>INDUCTION BY HIGH LIGHT</scope>
</reference>
<reference key="6">
    <citation type="journal article" date="2014" name="Plant Cell Physiol.">
        <title>Transcriptional regulation of the stress-responsive light harvesting complex genes in Chlamydomonas reinhardtii.</title>
        <authorList>
            <person name="Maruyama S."/>
            <person name="Tokutsu R."/>
            <person name="Minagawa J."/>
        </authorList>
    </citation>
    <scope>INDUCTION BY HIGH LIGHT</scope>
</reference>
<reference key="7">
    <citation type="journal article" date="2016" name="Proc. Natl. Acad. Sci. U.S.A.">
        <title>LHCSR1 induces a fast and reversible pH-dependent fluorescence quenching in LHCII in Chlamydomonas reinhardtii cells.</title>
        <authorList>
            <person name="Dinc E."/>
            <person name="Tian L."/>
            <person name="Roy L.M."/>
            <person name="Roth R."/>
            <person name="Goodenough U."/>
            <person name="Croce R."/>
        </authorList>
    </citation>
    <scope>FUNCTION</scope>
</reference>
<reference key="8">
    <citation type="journal article" date="2018" name="Proc. Natl. Acad. Sci. U.S.A.">
        <title>LHCSR1-dependent fluorescence quenching is mediated by excitation energy transfer from LHCII to photosystem I in Chlamydomonas reinhardtii.</title>
        <authorList>
            <person name="Kosuge K."/>
            <person name="Tokutsu R."/>
            <person name="Kim E."/>
            <person name="Akimoto S."/>
            <person name="Yokono M."/>
            <person name="Ueno Y."/>
            <person name="Minagawa J."/>
        </authorList>
    </citation>
    <scope>FUNCTION</scope>
</reference>
<reference key="9">
    <citation type="journal article" date="2019" name="Proc. Natl. Acad. Sci. U.S.A.">
        <title>LHCSR3 is a nonphotochemical quencher of both photosystems in Chlamydomonas reinhardtii.</title>
        <authorList>
            <person name="Girolomoni L."/>
            <person name="Cazzaniga S."/>
            <person name="Pinnola A."/>
            <person name="Perozeni F."/>
            <person name="Ballottari M."/>
            <person name="Bassi R."/>
        </authorList>
    </citation>
    <scope>FUNCTION</scope>
</reference>
<name>LHSR1_CHLRE</name>
<comment type="function">
    <text evidence="7 8 9">Required for non-photochemical quenching (NPQ), a mechanism that converts and dissipates the harmful excess absorbed light energy into heat and protect the photosynthetic apparatus from photo-oxidative damage (PubMed:27335457, PubMed:29555769, PubMed:30782831). Is able to sense luminal acidification of the thylakoid membranes, which occurs along with elevated electron flow caused by excess light, and to induce a large, fast, and reversible pH-dependent quenching in LHCII-containing membranes (PubMed:27335457). Mediates excitation energy transfer from light-harvesting complex II (LHCII) to photosystem I (PSI), rather than photosystem II (PSII), at low pH, which mimics the acidified lumen of the thylakoid membranes in high light-exposed chloroplasts (PubMed:29555769, PubMed:30782831). Activates PSI-dependent fluorescence quenching in addition to dissipating excitation energy in LHCII to avoid photooxidative stress under excess light (PubMed:29555769, PubMed:30782831).</text>
</comment>
<comment type="subcellular location">
    <subcellularLocation>
        <location evidence="4">Plastid</location>
        <location evidence="4">Chloroplast thylakoid membrane</location>
        <topology evidence="2">Multi-pass membrane protein</topology>
    </subcellularLocation>
</comment>
<comment type="induction">
    <text evidence="4 5 6 10">Transiently induced by transition from dark to light (at protein level) (PubMed:10794530, PubMed:8980495). Induced by high light stress (at protein level) (PubMed:19940928, PubMed:24850838).</text>
</comment>
<comment type="similarity">
    <text evidence="3">Belongs to the light-harvesting chlorophyll a/b-binding (LHC) protein family.</text>
</comment>
<protein>
    <recommendedName>
        <fullName evidence="11">Light-harvesting complex stress-related protein 1, chloroplastic</fullName>
    </recommendedName>
    <alternativeName>
        <fullName evidence="13">Chlorophyll a-b binding protein LHCSR1</fullName>
    </alternativeName>
</protein>
<evidence type="ECO:0000250" key="1">
    <source>
        <dbReference type="UniProtKB" id="P12333"/>
    </source>
</evidence>
<evidence type="ECO:0000255" key="2"/>
<evidence type="ECO:0000255" key="3">
    <source>
        <dbReference type="RuleBase" id="RU363080"/>
    </source>
</evidence>
<evidence type="ECO:0000269" key="4">
    <source>
    </source>
</evidence>
<evidence type="ECO:0000269" key="5">
    <source>
    </source>
</evidence>
<evidence type="ECO:0000269" key="6">
    <source>
    </source>
</evidence>
<evidence type="ECO:0000269" key="7">
    <source>
    </source>
</evidence>
<evidence type="ECO:0000269" key="8">
    <source>
    </source>
</evidence>
<evidence type="ECO:0000269" key="9">
    <source>
    </source>
</evidence>
<evidence type="ECO:0000269" key="10">
    <source>
    </source>
</evidence>
<evidence type="ECO:0000303" key="11">
    <source>
    </source>
</evidence>
<evidence type="ECO:0000303" key="12">
    <source>
    </source>
</evidence>
<evidence type="ECO:0000305" key="13"/>
<evidence type="ECO:0000312" key="14">
    <source>
        <dbReference type="EMBL" id="EDP01074.1"/>
    </source>
</evidence>
<evidence type="ECO:0000312" key="15">
    <source>
        <dbReference type="EMBL" id="PNW79770.1"/>
    </source>
</evidence>
<feature type="transit peptide" description="Chloroplast" evidence="2">
    <location>
        <begin position="1"/>
        <end position="39"/>
    </location>
</feature>
<feature type="chain" id="PRO_0000447656" description="Light-harvesting complex stress-related protein 1, chloroplastic">
    <location>
        <begin position="40"/>
        <end position="253"/>
    </location>
</feature>
<feature type="transmembrane region" description="Helical" evidence="2">
    <location>
        <begin position="87"/>
        <end position="107"/>
    </location>
</feature>
<feature type="transmembrane region" description="Helical" evidence="2">
    <location>
        <begin position="131"/>
        <end position="151"/>
    </location>
</feature>
<feature type="transmembrane region" description="Helical" evidence="2">
    <location>
        <begin position="197"/>
        <end position="217"/>
    </location>
</feature>
<feature type="binding site" description="axial binding residue" evidence="1">
    <location>
        <position position="45"/>
    </location>
    <ligand>
        <name>chlorophyll b</name>
        <dbReference type="ChEBI" id="CHEBI:61721"/>
        <label>1</label>
    </ligand>
    <ligandPart>
        <name>Mg</name>
        <dbReference type="ChEBI" id="CHEBI:25107"/>
    </ligandPart>
</feature>
<feature type="binding site" evidence="1">
    <location>
        <position position="60"/>
    </location>
    <ligand>
        <name>chlorophyll a</name>
        <dbReference type="ChEBI" id="CHEBI:58416"/>
        <label>1</label>
    </ligand>
</feature>
<feature type="binding site" description="axial binding residue" evidence="1">
    <location>
        <position position="81"/>
    </location>
    <ligand>
        <name>chlorophyll a</name>
        <dbReference type="ChEBI" id="CHEBI:58416"/>
        <label>1</label>
    </ligand>
    <ligandPart>
        <name>Mg</name>
        <dbReference type="ChEBI" id="CHEBI:25107"/>
    </ligandPart>
</feature>
<feature type="binding site" description="axial binding residue" evidence="1">
    <location>
        <position position="84"/>
    </location>
    <ligand>
        <name>chlorophyll a</name>
        <dbReference type="ChEBI" id="CHEBI:58416"/>
        <label>2</label>
    </ligand>
    <ligandPart>
        <name>Mg</name>
        <dbReference type="ChEBI" id="CHEBI:25107"/>
    </ligandPart>
</feature>
<feature type="binding site" evidence="1">
    <location>
        <position position="86"/>
    </location>
    <ligand>
        <name>chlorophyll b</name>
        <dbReference type="ChEBI" id="CHEBI:61721"/>
        <label>2</label>
    </ligand>
</feature>
<feature type="binding site" evidence="1">
    <location>
        <position position="124"/>
    </location>
    <ligand>
        <name>chlorophyll a</name>
        <dbReference type="ChEBI" id="CHEBI:58416"/>
        <label>3</label>
    </ligand>
</feature>
<feature type="binding site" description="axial binding residue" evidence="1">
    <location>
        <position position="141"/>
    </location>
    <ligand>
        <name>chlorophyll b</name>
        <dbReference type="ChEBI" id="CHEBI:61721"/>
        <label>3</label>
    </ligand>
    <ligandPart>
        <name>Mg</name>
        <dbReference type="ChEBI" id="CHEBI:25107"/>
    </ligandPart>
</feature>
<feature type="binding site" evidence="1">
    <location>
        <position position="144"/>
    </location>
    <ligand>
        <name>chlorophyll b</name>
        <dbReference type="ChEBI" id="CHEBI:61721"/>
        <label>4</label>
    </ligand>
</feature>
<feature type="binding site" evidence="1">
    <location>
        <position position="190"/>
    </location>
    <ligand>
        <name>chlorophyll a</name>
        <dbReference type="ChEBI" id="CHEBI:58416"/>
        <label>5</label>
    </ligand>
</feature>
<feature type="binding site" description="axial binding residue" evidence="1">
    <location>
        <position position="191"/>
    </location>
    <ligand>
        <name>chlorophyll a</name>
        <dbReference type="ChEBI" id="CHEBI:58416"/>
        <label>3</label>
    </ligand>
    <ligandPart>
        <name>Mg</name>
        <dbReference type="ChEBI" id="CHEBI:25107"/>
    </ligandPart>
</feature>
<feature type="binding site" description="axial binding residue" evidence="1">
    <location>
        <position position="194"/>
    </location>
    <ligand>
        <name>chlorophyll a</name>
        <dbReference type="ChEBI" id="CHEBI:58416"/>
        <label>4</label>
    </ligand>
    <ligandPart>
        <name>Mg</name>
        <dbReference type="ChEBI" id="CHEBI:25107"/>
    </ligandPart>
</feature>
<feature type="binding site" evidence="1">
    <location>
        <position position="196"/>
    </location>
    <ligand>
        <name>chlorophyll a</name>
        <dbReference type="ChEBI" id="CHEBI:58416"/>
        <label>1</label>
    </ligand>
</feature>
<feature type="binding site" description="axial binding residue" evidence="1">
    <location>
        <position position="208"/>
    </location>
    <ligand>
        <name>chlorophyll a</name>
        <dbReference type="ChEBI" id="CHEBI:58416"/>
        <label>5</label>
    </ligand>
    <ligandPart>
        <name>Mg</name>
        <dbReference type="ChEBI" id="CHEBI:25107"/>
    </ligandPart>
</feature>
<gene>
    <name evidence="11" type="primary">LHCSR1</name>
    <name evidence="12" type="synonym">LI818</name>
    <name evidence="15" type="ORF">CHLRE_08g365900v5</name>
    <name evidence="14" type="ORF">CHLREDRAFT_184724</name>
</gene>
<proteinExistence type="evidence at protein level"/>
<keyword id="KW-0148">Chlorophyll</keyword>
<keyword id="KW-0150">Chloroplast</keyword>
<keyword id="KW-0157">Chromophore</keyword>
<keyword id="KW-0460">Magnesium</keyword>
<keyword id="KW-0472">Membrane</keyword>
<keyword id="KW-0479">Metal-binding</keyword>
<keyword id="KW-0602">Photosynthesis</keyword>
<keyword id="KW-0603">Photosystem I</keyword>
<keyword id="KW-0604">Photosystem II</keyword>
<keyword id="KW-0934">Plastid</keyword>
<keyword id="KW-1185">Reference proteome</keyword>
<keyword id="KW-0346">Stress response</keyword>
<keyword id="KW-0793">Thylakoid</keyword>
<keyword id="KW-0809">Transit peptide</keyword>
<keyword id="KW-0812">Transmembrane</keyword>
<keyword id="KW-1133">Transmembrane helix</keyword>
<dbReference type="EMBL" id="X95326">
    <property type="protein sequence ID" value="CAA64632.1"/>
    <property type="molecule type" value="mRNA"/>
</dbReference>
<dbReference type="EMBL" id="DS496136">
    <property type="protein sequence ID" value="EDP01074.1"/>
    <property type="molecule type" value="Genomic_DNA"/>
</dbReference>
<dbReference type="EMBL" id="CM008969">
    <property type="protein sequence ID" value="PNW79770.1"/>
    <property type="molecule type" value="Genomic_DNA"/>
</dbReference>
<dbReference type="PIR" id="T08175">
    <property type="entry name" value="T08175"/>
</dbReference>
<dbReference type="RefSeq" id="XP_001696125.1">
    <property type="nucleotide sequence ID" value="XM_001696073.1"/>
</dbReference>
<dbReference type="SMR" id="P93664"/>
<dbReference type="STRING" id="3055.P93664"/>
<dbReference type="PaxDb" id="3055-EDP01074"/>
<dbReference type="ProMEX" id="P93664"/>
<dbReference type="EnsemblPlants" id="PNW79770">
    <property type="protein sequence ID" value="PNW79770"/>
    <property type="gene ID" value="CHLRE_08g365900v5"/>
</dbReference>
<dbReference type="GeneID" id="5721658"/>
<dbReference type="Gramene" id="PNW79770">
    <property type="protein sequence ID" value="PNW79770"/>
    <property type="gene ID" value="CHLRE_08g365900v5"/>
</dbReference>
<dbReference type="KEGG" id="cre:CHLRE_08g365900v5"/>
<dbReference type="eggNOG" id="ENOG502RXY6">
    <property type="taxonomic scope" value="Eukaryota"/>
</dbReference>
<dbReference type="HOGENOM" id="CLU_057943_3_1_1"/>
<dbReference type="InParanoid" id="P93664"/>
<dbReference type="OMA" id="DYTPGDY"/>
<dbReference type="OrthoDB" id="423598at2759"/>
<dbReference type="Proteomes" id="UP000006906">
    <property type="component" value="Chromosome 8"/>
</dbReference>
<dbReference type="GO" id="GO:0009535">
    <property type="term" value="C:chloroplast thylakoid membrane"/>
    <property type="evidence" value="ECO:0007669"/>
    <property type="project" value="UniProtKB-SubCell"/>
</dbReference>
<dbReference type="GO" id="GO:0009522">
    <property type="term" value="C:photosystem I"/>
    <property type="evidence" value="ECO:0007669"/>
    <property type="project" value="UniProtKB-KW"/>
</dbReference>
<dbReference type="GO" id="GO:0009523">
    <property type="term" value="C:photosystem II"/>
    <property type="evidence" value="ECO:0007669"/>
    <property type="project" value="UniProtKB-KW"/>
</dbReference>
<dbReference type="GO" id="GO:0042651">
    <property type="term" value="C:thylakoid membrane"/>
    <property type="evidence" value="ECO:0000314"/>
    <property type="project" value="UniProtKB"/>
</dbReference>
<dbReference type="GO" id="GO:0016168">
    <property type="term" value="F:chlorophyll binding"/>
    <property type="evidence" value="ECO:0007669"/>
    <property type="project" value="UniProtKB-KW"/>
</dbReference>
<dbReference type="GO" id="GO:0046872">
    <property type="term" value="F:metal ion binding"/>
    <property type="evidence" value="ECO:0007669"/>
    <property type="project" value="UniProtKB-KW"/>
</dbReference>
<dbReference type="GO" id="GO:0010196">
    <property type="term" value="P:nonphotochemical quenching"/>
    <property type="evidence" value="ECO:0000315"/>
    <property type="project" value="UniProtKB"/>
</dbReference>
<dbReference type="GO" id="GO:0009768">
    <property type="term" value="P:photosynthesis, light harvesting in photosystem I"/>
    <property type="evidence" value="ECO:0000318"/>
    <property type="project" value="GO_Central"/>
</dbReference>
<dbReference type="GO" id="GO:0009644">
    <property type="term" value="P:response to high light intensity"/>
    <property type="evidence" value="ECO:0000315"/>
    <property type="project" value="UniProtKB"/>
</dbReference>
<dbReference type="GO" id="GO:0009416">
    <property type="term" value="P:response to light stimulus"/>
    <property type="evidence" value="ECO:0000318"/>
    <property type="project" value="GO_Central"/>
</dbReference>
<dbReference type="GO" id="GO:0080183">
    <property type="term" value="P:response to photooxidative stress"/>
    <property type="evidence" value="ECO:0000315"/>
    <property type="project" value="UniProtKB"/>
</dbReference>
<dbReference type="FunFam" id="1.10.3460.10:FF:000012">
    <property type="entry name" value="Fucoxanthin chlorophyll a/c protein, LI818 clade"/>
    <property type="match status" value="1"/>
</dbReference>
<dbReference type="Gene3D" id="1.10.3460.10">
    <property type="entry name" value="Chlorophyll a/b binding protein domain"/>
    <property type="match status" value="1"/>
</dbReference>
<dbReference type="InterPro" id="IPR001344">
    <property type="entry name" value="Chloro_AB-bd_pln"/>
</dbReference>
<dbReference type="InterPro" id="IPR022796">
    <property type="entry name" value="Chloroa_b-bind"/>
</dbReference>
<dbReference type="PANTHER" id="PTHR21649">
    <property type="entry name" value="CHLOROPHYLL A/B BINDING PROTEIN"/>
    <property type="match status" value="1"/>
</dbReference>
<dbReference type="Pfam" id="PF00504">
    <property type="entry name" value="Chloroa_b-bind"/>
    <property type="match status" value="1"/>
</dbReference>
<dbReference type="SUPFAM" id="SSF103511">
    <property type="entry name" value="Chlorophyll a-b binding protein"/>
    <property type="match status" value="1"/>
</dbReference>
<sequence>MAMMMRKAAAVPASSRRSVAVNSVSGKRTVSGKAGAPVPEDVLAYAKTLPGVTAPFDNVFDPAGFLATASVKDVRRWRESEITHGRVAMLAALGFIVGEQLQDFPLFFNFDGRVSGPAIYHFQQIGQGFWEPLLIAIGVAESYRVAVGWATPTGTGFNSLKDDYEPGDLGFDPLGLKPTDPEELKTLQTKELNNGRLAMIAIAAFVAQELVEQTEIFEHLVLRFEKEVILELEDVERDLGLPLTPLPDNLKAI</sequence>
<accession>P93664</accession>